<accession>B1XUT6</accession>
<proteinExistence type="inferred from homology"/>
<dbReference type="EC" id="2.8.4.4" evidence="1"/>
<dbReference type="EMBL" id="CP001010">
    <property type="protein sequence ID" value="ACB44113.1"/>
    <property type="molecule type" value="Genomic_DNA"/>
</dbReference>
<dbReference type="SMR" id="B1XUT6"/>
<dbReference type="STRING" id="452638.Pnec_0915"/>
<dbReference type="KEGG" id="pne:Pnec_0915"/>
<dbReference type="eggNOG" id="COG0621">
    <property type="taxonomic scope" value="Bacteria"/>
</dbReference>
<dbReference type="HOGENOM" id="CLU_018697_0_0_4"/>
<dbReference type="OrthoDB" id="9805215at2"/>
<dbReference type="GO" id="GO:0005829">
    <property type="term" value="C:cytosol"/>
    <property type="evidence" value="ECO:0007669"/>
    <property type="project" value="TreeGrafter"/>
</dbReference>
<dbReference type="GO" id="GO:0051539">
    <property type="term" value="F:4 iron, 4 sulfur cluster binding"/>
    <property type="evidence" value="ECO:0007669"/>
    <property type="project" value="UniProtKB-UniRule"/>
</dbReference>
<dbReference type="GO" id="GO:0035599">
    <property type="term" value="F:aspartic acid methylthiotransferase activity"/>
    <property type="evidence" value="ECO:0007669"/>
    <property type="project" value="TreeGrafter"/>
</dbReference>
<dbReference type="GO" id="GO:0046872">
    <property type="term" value="F:metal ion binding"/>
    <property type="evidence" value="ECO:0007669"/>
    <property type="project" value="UniProtKB-KW"/>
</dbReference>
<dbReference type="GO" id="GO:0103039">
    <property type="term" value="F:protein methylthiotransferase activity"/>
    <property type="evidence" value="ECO:0007669"/>
    <property type="project" value="UniProtKB-EC"/>
</dbReference>
<dbReference type="GO" id="GO:0006400">
    <property type="term" value="P:tRNA modification"/>
    <property type="evidence" value="ECO:0007669"/>
    <property type="project" value="InterPro"/>
</dbReference>
<dbReference type="CDD" id="cd01335">
    <property type="entry name" value="Radical_SAM"/>
    <property type="match status" value="1"/>
</dbReference>
<dbReference type="FunFam" id="3.40.50.12160:FF:000002">
    <property type="entry name" value="Ribosomal protein S12 methylthiotransferase RimO"/>
    <property type="match status" value="1"/>
</dbReference>
<dbReference type="FunFam" id="3.80.30.20:FF:000001">
    <property type="entry name" value="tRNA-2-methylthio-N(6)-dimethylallyladenosine synthase 2"/>
    <property type="match status" value="1"/>
</dbReference>
<dbReference type="Gene3D" id="3.40.50.12160">
    <property type="entry name" value="Methylthiotransferase, N-terminal domain"/>
    <property type="match status" value="1"/>
</dbReference>
<dbReference type="Gene3D" id="2.40.50.140">
    <property type="entry name" value="Nucleic acid-binding proteins"/>
    <property type="match status" value="1"/>
</dbReference>
<dbReference type="Gene3D" id="3.80.30.20">
    <property type="entry name" value="tm_1862 like domain"/>
    <property type="match status" value="1"/>
</dbReference>
<dbReference type="HAMAP" id="MF_01865">
    <property type="entry name" value="MTTase_RimO"/>
    <property type="match status" value="1"/>
</dbReference>
<dbReference type="InterPro" id="IPR006638">
    <property type="entry name" value="Elp3/MiaA/NifB-like_rSAM"/>
</dbReference>
<dbReference type="InterPro" id="IPR005839">
    <property type="entry name" value="Methylthiotransferase"/>
</dbReference>
<dbReference type="InterPro" id="IPR020612">
    <property type="entry name" value="Methylthiotransferase_CS"/>
</dbReference>
<dbReference type="InterPro" id="IPR013848">
    <property type="entry name" value="Methylthiotransferase_N"/>
</dbReference>
<dbReference type="InterPro" id="IPR038135">
    <property type="entry name" value="Methylthiotransferase_N_sf"/>
</dbReference>
<dbReference type="InterPro" id="IPR012340">
    <property type="entry name" value="NA-bd_OB-fold"/>
</dbReference>
<dbReference type="InterPro" id="IPR005840">
    <property type="entry name" value="Ribosomal_uS12_MeSTrfase_RimO"/>
</dbReference>
<dbReference type="InterPro" id="IPR007197">
    <property type="entry name" value="rSAM"/>
</dbReference>
<dbReference type="InterPro" id="IPR023404">
    <property type="entry name" value="rSAM_horseshoe"/>
</dbReference>
<dbReference type="InterPro" id="IPR002792">
    <property type="entry name" value="TRAM_dom"/>
</dbReference>
<dbReference type="NCBIfam" id="TIGR01125">
    <property type="entry name" value="30S ribosomal protein S12 methylthiotransferase RimO"/>
    <property type="match status" value="1"/>
</dbReference>
<dbReference type="NCBIfam" id="TIGR00089">
    <property type="entry name" value="MiaB/RimO family radical SAM methylthiotransferase"/>
    <property type="match status" value="1"/>
</dbReference>
<dbReference type="PANTHER" id="PTHR43837">
    <property type="entry name" value="RIBOSOMAL PROTEIN S12 METHYLTHIOTRANSFERASE RIMO"/>
    <property type="match status" value="1"/>
</dbReference>
<dbReference type="PANTHER" id="PTHR43837:SF1">
    <property type="entry name" value="RIBOSOMAL PROTEIN US12 METHYLTHIOTRANSFERASE RIMO"/>
    <property type="match status" value="1"/>
</dbReference>
<dbReference type="Pfam" id="PF04055">
    <property type="entry name" value="Radical_SAM"/>
    <property type="match status" value="1"/>
</dbReference>
<dbReference type="Pfam" id="PF18693">
    <property type="entry name" value="TRAM_2"/>
    <property type="match status" value="1"/>
</dbReference>
<dbReference type="Pfam" id="PF00919">
    <property type="entry name" value="UPF0004"/>
    <property type="match status" value="1"/>
</dbReference>
<dbReference type="SFLD" id="SFLDG01082">
    <property type="entry name" value="B12-binding_domain_containing"/>
    <property type="match status" value="1"/>
</dbReference>
<dbReference type="SFLD" id="SFLDG01061">
    <property type="entry name" value="methylthiotransferase"/>
    <property type="match status" value="1"/>
</dbReference>
<dbReference type="SFLD" id="SFLDF00274">
    <property type="entry name" value="ribosomal_protein_S12_methylth"/>
    <property type="match status" value="1"/>
</dbReference>
<dbReference type="SMART" id="SM00729">
    <property type="entry name" value="Elp3"/>
    <property type="match status" value="1"/>
</dbReference>
<dbReference type="SUPFAM" id="SSF102114">
    <property type="entry name" value="Radical SAM enzymes"/>
    <property type="match status" value="1"/>
</dbReference>
<dbReference type="PROSITE" id="PS51449">
    <property type="entry name" value="MTTASE_N"/>
    <property type="match status" value="1"/>
</dbReference>
<dbReference type="PROSITE" id="PS01278">
    <property type="entry name" value="MTTASE_RADICAL"/>
    <property type="match status" value="1"/>
</dbReference>
<dbReference type="PROSITE" id="PS51918">
    <property type="entry name" value="RADICAL_SAM"/>
    <property type="match status" value="1"/>
</dbReference>
<dbReference type="PROSITE" id="PS50926">
    <property type="entry name" value="TRAM"/>
    <property type="match status" value="1"/>
</dbReference>
<comment type="function">
    <text evidence="1">Catalyzes the methylthiolation of an aspartic acid residue of ribosomal protein uS12.</text>
</comment>
<comment type="catalytic activity">
    <reaction evidence="1">
        <text>L-aspartate(89)-[ribosomal protein uS12]-hydrogen + (sulfur carrier)-SH + AH2 + 2 S-adenosyl-L-methionine = 3-methylsulfanyl-L-aspartate(89)-[ribosomal protein uS12]-hydrogen + (sulfur carrier)-H + 5'-deoxyadenosine + L-methionine + A + S-adenosyl-L-homocysteine + 2 H(+)</text>
        <dbReference type="Rhea" id="RHEA:37087"/>
        <dbReference type="Rhea" id="RHEA-COMP:10460"/>
        <dbReference type="Rhea" id="RHEA-COMP:10461"/>
        <dbReference type="Rhea" id="RHEA-COMP:14737"/>
        <dbReference type="Rhea" id="RHEA-COMP:14739"/>
        <dbReference type="ChEBI" id="CHEBI:13193"/>
        <dbReference type="ChEBI" id="CHEBI:15378"/>
        <dbReference type="ChEBI" id="CHEBI:17319"/>
        <dbReference type="ChEBI" id="CHEBI:17499"/>
        <dbReference type="ChEBI" id="CHEBI:29917"/>
        <dbReference type="ChEBI" id="CHEBI:29961"/>
        <dbReference type="ChEBI" id="CHEBI:57844"/>
        <dbReference type="ChEBI" id="CHEBI:57856"/>
        <dbReference type="ChEBI" id="CHEBI:59789"/>
        <dbReference type="ChEBI" id="CHEBI:64428"/>
        <dbReference type="ChEBI" id="CHEBI:73599"/>
        <dbReference type="EC" id="2.8.4.4"/>
    </reaction>
</comment>
<comment type="cofactor">
    <cofactor evidence="1">
        <name>[4Fe-4S] cluster</name>
        <dbReference type="ChEBI" id="CHEBI:49883"/>
    </cofactor>
    <text evidence="1">Binds 2 [4Fe-4S] clusters. One cluster is coordinated with 3 cysteines and an exchangeable S-adenosyl-L-methionine.</text>
</comment>
<comment type="subcellular location">
    <subcellularLocation>
        <location evidence="1">Cytoplasm</location>
    </subcellularLocation>
</comment>
<comment type="similarity">
    <text evidence="1">Belongs to the methylthiotransferase family. RimO subfamily.</text>
</comment>
<protein>
    <recommendedName>
        <fullName evidence="1">Ribosomal protein uS12 methylthiotransferase RimO</fullName>
        <shortName evidence="1">uS12 MTTase</shortName>
        <shortName evidence="1">uS12 methylthiotransferase</shortName>
        <ecNumber evidence="1">2.8.4.4</ecNumber>
    </recommendedName>
    <alternativeName>
        <fullName evidence="1">Ribosomal protein uS12 (aspartate-C(3))-methylthiotransferase</fullName>
    </alternativeName>
    <alternativeName>
        <fullName evidence="1">Ribosome maturation factor RimO</fullName>
    </alternativeName>
</protein>
<name>RIMO_POLNS</name>
<gene>
    <name evidence="1" type="primary">rimO</name>
    <name type="ordered locus">Pnec_0915</name>
</gene>
<evidence type="ECO:0000255" key="1">
    <source>
        <dbReference type="HAMAP-Rule" id="MF_01865"/>
    </source>
</evidence>
<evidence type="ECO:0000255" key="2">
    <source>
        <dbReference type="PROSITE-ProRule" id="PRU01266"/>
    </source>
</evidence>
<feature type="chain" id="PRO_0000374921" description="Ribosomal protein uS12 methylthiotransferase RimO">
    <location>
        <begin position="1"/>
        <end position="452"/>
    </location>
</feature>
<feature type="domain" description="MTTase N-terminal" evidence="1">
    <location>
        <begin position="3"/>
        <end position="118"/>
    </location>
</feature>
<feature type="domain" description="Radical SAM core" evidence="2">
    <location>
        <begin position="135"/>
        <end position="382"/>
    </location>
</feature>
<feature type="domain" description="TRAM" evidence="1">
    <location>
        <begin position="384"/>
        <end position="452"/>
    </location>
</feature>
<feature type="binding site" evidence="1">
    <location>
        <position position="12"/>
    </location>
    <ligand>
        <name>[4Fe-4S] cluster</name>
        <dbReference type="ChEBI" id="CHEBI:49883"/>
        <label>1</label>
    </ligand>
</feature>
<feature type="binding site" evidence="1">
    <location>
        <position position="48"/>
    </location>
    <ligand>
        <name>[4Fe-4S] cluster</name>
        <dbReference type="ChEBI" id="CHEBI:49883"/>
        <label>1</label>
    </ligand>
</feature>
<feature type="binding site" evidence="1">
    <location>
        <position position="77"/>
    </location>
    <ligand>
        <name>[4Fe-4S] cluster</name>
        <dbReference type="ChEBI" id="CHEBI:49883"/>
        <label>1</label>
    </ligand>
</feature>
<feature type="binding site" evidence="1">
    <location>
        <position position="149"/>
    </location>
    <ligand>
        <name>[4Fe-4S] cluster</name>
        <dbReference type="ChEBI" id="CHEBI:49883"/>
        <label>2</label>
        <note>4Fe-4S-S-AdoMet</note>
    </ligand>
</feature>
<feature type="binding site" evidence="1">
    <location>
        <position position="153"/>
    </location>
    <ligand>
        <name>[4Fe-4S] cluster</name>
        <dbReference type="ChEBI" id="CHEBI:49883"/>
        <label>2</label>
        <note>4Fe-4S-S-AdoMet</note>
    </ligand>
</feature>
<feature type="binding site" evidence="1">
    <location>
        <position position="156"/>
    </location>
    <ligand>
        <name>[4Fe-4S] cluster</name>
        <dbReference type="ChEBI" id="CHEBI:49883"/>
        <label>2</label>
        <note>4Fe-4S-S-AdoMet</note>
    </ligand>
</feature>
<reference key="1">
    <citation type="journal article" date="2013" name="Proc. Natl. Acad. Sci. U.S.A.">
        <title>Polynucleobacter necessarius, a model for genome reduction in both free-living and symbiotic bacteria.</title>
        <authorList>
            <person name="Boscaro V."/>
            <person name="Felletti M."/>
            <person name="Vannini C."/>
            <person name="Ackerman M.S."/>
            <person name="Chain P.S."/>
            <person name="Malfatti S."/>
            <person name="Vergez L.M."/>
            <person name="Shin M."/>
            <person name="Doak T.G."/>
            <person name="Lynch M."/>
            <person name="Petroni G."/>
        </authorList>
    </citation>
    <scope>NUCLEOTIDE SEQUENCE [LARGE SCALE GENOMIC DNA]</scope>
    <source>
        <strain>STIR1</strain>
    </source>
</reference>
<organism>
    <name type="scientific">Polynucleobacter necessarius subsp. necessarius (strain STIR1)</name>
    <dbReference type="NCBI Taxonomy" id="452638"/>
    <lineage>
        <taxon>Bacteria</taxon>
        <taxon>Pseudomonadati</taxon>
        <taxon>Pseudomonadota</taxon>
        <taxon>Betaproteobacteria</taxon>
        <taxon>Burkholderiales</taxon>
        <taxon>Burkholderiaceae</taxon>
        <taxon>Polynucleobacter</taxon>
    </lineage>
</organism>
<sequence length="452" mass="49793">MAGKIGFVSLGCPKALVDSELILTQLSAEGYKTAKDYSGADLVVVNTCGFIDSAVEESLSAIGEALAENGKVIVTGCLGARKNADGSDLIHSIHPKVLAVTGPHATDEVMQVIHLHLPKPHDLYTDLVPSARVRLTPKHYAYLKISEGCNHRCTFCIIPNLRGDLVSRPIGDVLLEVKRLFESGVKELLVVSQDTSAYGVDIQYRTGFWDGKPVKTKMFDLVNTLNQIAREHQAWVRLHYVYPYPHVDDILPLMAEFAEHGYGVLPYLDIPLQHAHPDVLKKMKRPASGEKNLERILAWREACPDLVIRSTFIAGFPGETEGEFEYLLNFLDEAQIDRAGCFAYSPVDGATANELANPVPDQIREDRRARLMAKAEEISVGRLAKKIGKRLQVIIDRVDDHGGIGRTIGDAPEIDGLVRVLPANKPSKRYRAGEIIRVTVISSQGHDLIAET</sequence>
<keyword id="KW-0004">4Fe-4S</keyword>
<keyword id="KW-0963">Cytoplasm</keyword>
<keyword id="KW-0408">Iron</keyword>
<keyword id="KW-0411">Iron-sulfur</keyword>
<keyword id="KW-0479">Metal-binding</keyword>
<keyword id="KW-0949">S-adenosyl-L-methionine</keyword>
<keyword id="KW-0808">Transferase</keyword>